<comment type="function">
    <text evidence="1">Endoplasmic reticulum and mitochondria-associated protein that probably functions as a regulator of cellular redox state and thereby regulates protein post-translational modification, protein folding and mitochondrial activity.</text>
</comment>
<comment type="subunit">
    <text evidence="1">Monomer. Homodimer; disulfide-linked. Occurs in both reduced and oxidized monomeric form. Oxidative conditions increase homodimerization.</text>
</comment>
<comment type="subcellular location">
    <subcellularLocation>
        <location evidence="1">Endoplasmic reticulum membrane</location>
        <topology evidence="2">Single-pass type I membrane protein</topology>
    </subcellularLocation>
    <subcellularLocation>
        <location evidence="1">Mitochondrion membrane</location>
        <topology evidence="2">Single-pass type I membrane protein</topology>
    </subcellularLocation>
    <text evidence="1">Localizes to endoplasmic reticulum mitochondria-associated membrane (MAMs) that connect the endoplasmic reticulum and the mitochondria.</text>
</comment>
<comment type="domain">
    <text evidence="5">The thioredoxin domain lacks the 2 redox-active cysteines, suggesting that it lacks thioredoxin activity.</text>
</comment>
<comment type="domain">
    <text evidence="5">The di-lysine motif confers endoplasmic reticulum localization for type I membrane proteins.</text>
</comment>
<dbReference type="EMBL" id="BX511158">
    <property type="protein sequence ID" value="CAX14153.1"/>
    <property type="molecule type" value="Genomic_DNA"/>
</dbReference>
<dbReference type="EMBL" id="BC071481">
    <property type="protein sequence ID" value="AAH71481.1"/>
    <property type="molecule type" value="mRNA"/>
</dbReference>
<dbReference type="RefSeq" id="NP_001002113.1">
    <property type="nucleotide sequence ID" value="NM_001002113.1"/>
</dbReference>
<dbReference type="SMR" id="Q6IQC7"/>
<dbReference type="FunCoup" id="Q6IQC7">
    <property type="interactions" value="1308"/>
</dbReference>
<dbReference type="STRING" id="7955.ENSDARP00000022891"/>
<dbReference type="PaxDb" id="7955-ENSDARP00000022891"/>
<dbReference type="Ensembl" id="ENSDART00000009858">
    <property type="protein sequence ID" value="ENSDARP00000022891"/>
    <property type="gene ID" value="ENSDARG00000007786"/>
</dbReference>
<dbReference type="GeneID" id="415203"/>
<dbReference type="KEGG" id="dre:415203"/>
<dbReference type="AGR" id="ZFIN:ZDB-GENE-040625-105"/>
<dbReference type="CTD" id="415203"/>
<dbReference type="ZFIN" id="ZDB-GENE-040625-105">
    <property type="gene designation" value="tmx2b"/>
</dbReference>
<dbReference type="eggNOG" id="KOG0914">
    <property type="taxonomic scope" value="Eukaryota"/>
</dbReference>
<dbReference type="HOGENOM" id="CLU_064868_0_0_1"/>
<dbReference type="InParanoid" id="Q6IQC7"/>
<dbReference type="OMA" id="TWIIEFF"/>
<dbReference type="OrthoDB" id="20229at2759"/>
<dbReference type="PhylomeDB" id="Q6IQC7"/>
<dbReference type="TreeFam" id="TF314606"/>
<dbReference type="PRO" id="PR:Q6IQC7"/>
<dbReference type="Proteomes" id="UP000000437">
    <property type="component" value="Chromosome 1"/>
</dbReference>
<dbReference type="Bgee" id="ENSDARG00000007786">
    <property type="expression patterns" value="Expressed in pharyngeal gill and 27 other cell types or tissues"/>
</dbReference>
<dbReference type="GO" id="GO:0005789">
    <property type="term" value="C:endoplasmic reticulum membrane"/>
    <property type="evidence" value="ECO:0000318"/>
    <property type="project" value="GO_Central"/>
</dbReference>
<dbReference type="GO" id="GO:0044233">
    <property type="term" value="C:mitochondria-associated endoplasmic reticulum membrane contact site"/>
    <property type="evidence" value="ECO:0000250"/>
    <property type="project" value="UniProtKB"/>
</dbReference>
<dbReference type="GO" id="GO:0031966">
    <property type="term" value="C:mitochondrial membrane"/>
    <property type="evidence" value="ECO:0007669"/>
    <property type="project" value="UniProtKB-SubCell"/>
</dbReference>
<dbReference type="GO" id="GO:0005739">
    <property type="term" value="C:mitochondrion"/>
    <property type="evidence" value="ECO:0000318"/>
    <property type="project" value="GO_Central"/>
</dbReference>
<dbReference type="GO" id="GO:0015036">
    <property type="term" value="F:disulfide oxidoreductase activity"/>
    <property type="evidence" value="ECO:0000318"/>
    <property type="project" value="GO_Central"/>
</dbReference>
<dbReference type="GO" id="GO:0007420">
    <property type="term" value="P:brain development"/>
    <property type="evidence" value="ECO:0000318"/>
    <property type="project" value="GO_Central"/>
</dbReference>
<dbReference type="CDD" id="cd02962">
    <property type="entry name" value="TMX2"/>
    <property type="match status" value="1"/>
</dbReference>
<dbReference type="Gene3D" id="3.40.30.10">
    <property type="entry name" value="Glutaredoxin"/>
    <property type="match status" value="1"/>
</dbReference>
<dbReference type="InterPro" id="IPR036249">
    <property type="entry name" value="Thioredoxin-like_sf"/>
</dbReference>
<dbReference type="InterPro" id="IPR013766">
    <property type="entry name" value="Thioredoxin_domain"/>
</dbReference>
<dbReference type="InterPro" id="IPR039101">
    <property type="entry name" value="TMX2"/>
</dbReference>
<dbReference type="InterPro" id="IPR037463">
    <property type="entry name" value="TMX2_thioredoxin_dom"/>
</dbReference>
<dbReference type="PANTHER" id="PTHR15853">
    <property type="entry name" value="THIOREDOXIN-RELATED"/>
    <property type="match status" value="1"/>
</dbReference>
<dbReference type="PANTHER" id="PTHR15853:SF0">
    <property type="entry name" value="THIOREDOXIN-RELATED TRANSMEMBRANE PROTEIN 2"/>
    <property type="match status" value="1"/>
</dbReference>
<dbReference type="Pfam" id="PF00085">
    <property type="entry name" value="Thioredoxin"/>
    <property type="match status" value="1"/>
</dbReference>
<dbReference type="SUPFAM" id="SSF52833">
    <property type="entry name" value="Thioredoxin-like"/>
    <property type="match status" value="1"/>
</dbReference>
<dbReference type="PROSITE" id="PS51352">
    <property type="entry name" value="THIOREDOXIN_2"/>
    <property type="match status" value="1"/>
</dbReference>
<name>TMX2B_DANRE</name>
<reference key="1">
    <citation type="journal article" date="2013" name="Nature">
        <title>The zebrafish reference genome sequence and its relationship to the human genome.</title>
        <authorList>
            <person name="Howe K."/>
            <person name="Clark M.D."/>
            <person name="Torroja C.F."/>
            <person name="Torrance J."/>
            <person name="Berthelot C."/>
            <person name="Muffato M."/>
            <person name="Collins J.E."/>
            <person name="Humphray S."/>
            <person name="McLaren K."/>
            <person name="Matthews L."/>
            <person name="McLaren S."/>
            <person name="Sealy I."/>
            <person name="Caccamo M."/>
            <person name="Churcher C."/>
            <person name="Scott C."/>
            <person name="Barrett J.C."/>
            <person name="Koch R."/>
            <person name="Rauch G.J."/>
            <person name="White S."/>
            <person name="Chow W."/>
            <person name="Kilian B."/>
            <person name="Quintais L.T."/>
            <person name="Guerra-Assuncao J.A."/>
            <person name="Zhou Y."/>
            <person name="Gu Y."/>
            <person name="Yen J."/>
            <person name="Vogel J.H."/>
            <person name="Eyre T."/>
            <person name="Redmond S."/>
            <person name="Banerjee R."/>
            <person name="Chi J."/>
            <person name="Fu B."/>
            <person name="Langley E."/>
            <person name="Maguire S.F."/>
            <person name="Laird G.K."/>
            <person name="Lloyd D."/>
            <person name="Kenyon E."/>
            <person name="Donaldson S."/>
            <person name="Sehra H."/>
            <person name="Almeida-King J."/>
            <person name="Loveland J."/>
            <person name="Trevanion S."/>
            <person name="Jones M."/>
            <person name="Quail M."/>
            <person name="Willey D."/>
            <person name="Hunt A."/>
            <person name="Burton J."/>
            <person name="Sims S."/>
            <person name="McLay K."/>
            <person name="Plumb B."/>
            <person name="Davis J."/>
            <person name="Clee C."/>
            <person name="Oliver K."/>
            <person name="Clark R."/>
            <person name="Riddle C."/>
            <person name="Elliot D."/>
            <person name="Threadgold G."/>
            <person name="Harden G."/>
            <person name="Ware D."/>
            <person name="Begum S."/>
            <person name="Mortimore B."/>
            <person name="Kerry G."/>
            <person name="Heath P."/>
            <person name="Phillimore B."/>
            <person name="Tracey A."/>
            <person name="Corby N."/>
            <person name="Dunn M."/>
            <person name="Johnson C."/>
            <person name="Wood J."/>
            <person name="Clark S."/>
            <person name="Pelan S."/>
            <person name="Griffiths G."/>
            <person name="Smith M."/>
            <person name="Glithero R."/>
            <person name="Howden P."/>
            <person name="Barker N."/>
            <person name="Lloyd C."/>
            <person name="Stevens C."/>
            <person name="Harley J."/>
            <person name="Holt K."/>
            <person name="Panagiotidis G."/>
            <person name="Lovell J."/>
            <person name="Beasley H."/>
            <person name="Henderson C."/>
            <person name="Gordon D."/>
            <person name="Auger K."/>
            <person name="Wright D."/>
            <person name="Collins J."/>
            <person name="Raisen C."/>
            <person name="Dyer L."/>
            <person name="Leung K."/>
            <person name="Robertson L."/>
            <person name="Ambridge K."/>
            <person name="Leongamornlert D."/>
            <person name="McGuire S."/>
            <person name="Gilderthorp R."/>
            <person name="Griffiths C."/>
            <person name="Manthravadi D."/>
            <person name="Nichol S."/>
            <person name="Barker G."/>
            <person name="Whitehead S."/>
            <person name="Kay M."/>
            <person name="Brown J."/>
            <person name="Murnane C."/>
            <person name="Gray E."/>
            <person name="Humphries M."/>
            <person name="Sycamore N."/>
            <person name="Barker D."/>
            <person name="Saunders D."/>
            <person name="Wallis J."/>
            <person name="Babbage A."/>
            <person name="Hammond S."/>
            <person name="Mashreghi-Mohammadi M."/>
            <person name="Barr L."/>
            <person name="Martin S."/>
            <person name="Wray P."/>
            <person name="Ellington A."/>
            <person name="Matthews N."/>
            <person name="Ellwood M."/>
            <person name="Woodmansey R."/>
            <person name="Clark G."/>
            <person name="Cooper J."/>
            <person name="Tromans A."/>
            <person name="Grafham D."/>
            <person name="Skuce C."/>
            <person name="Pandian R."/>
            <person name="Andrews R."/>
            <person name="Harrison E."/>
            <person name="Kimberley A."/>
            <person name="Garnett J."/>
            <person name="Fosker N."/>
            <person name="Hall R."/>
            <person name="Garner P."/>
            <person name="Kelly D."/>
            <person name="Bird C."/>
            <person name="Palmer S."/>
            <person name="Gehring I."/>
            <person name="Berger A."/>
            <person name="Dooley C.M."/>
            <person name="Ersan-Urun Z."/>
            <person name="Eser C."/>
            <person name="Geiger H."/>
            <person name="Geisler M."/>
            <person name="Karotki L."/>
            <person name="Kirn A."/>
            <person name="Konantz J."/>
            <person name="Konantz M."/>
            <person name="Oberlander M."/>
            <person name="Rudolph-Geiger S."/>
            <person name="Teucke M."/>
            <person name="Lanz C."/>
            <person name="Raddatz G."/>
            <person name="Osoegawa K."/>
            <person name="Zhu B."/>
            <person name="Rapp A."/>
            <person name="Widaa S."/>
            <person name="Langford C."/>
            <person name="Yang F."/>
            <person name="Schuster S.C."/>
            <person name="Carter N.P."/>
            <person name="Harrow J."/>
            <person name="Ning Z."/>
            <person name="Herrero J."/>
            <person name="Searle S.M."/>
            <person name="Enright A."/>
            <person name="Geisler R."/>
            <person name="Plasterk R.H."/>
            <person name="Lee C."/>
            <person name="Westerfield M."/>
            <person name="de Jong P.J."/>
            <person name="Zon L.I."/>
            <person name="Postlethwait J.H."/>
            <person name="Nusslein-Volhard C."/>
            <person name="Hubbard T.J."/>
            <person name="Roest Crollius H."/>
            <person name="Rogers J."/>
            <person name="Stemple D.L."/>
        </authorList>
    </citation>
    <scope>NUCLEOTIDE SEQUENCE [LARGE SCALE GENOMIC DNA]</scope>
    <source>
        <strain>Tuebingen</strain>
    </source>
</reference>
<reference key="2">
    <citation type="submission" date="2004-06" db="EMBL/GenBank/DDBJ databases">
        <authorList>
            <consortium name="NIH - Zebrafish Gene Collection (ZGC) project"/>
        </authorList>
    </citation>
    <scope>NUCLEOTIDE SEQUENCE [LARGE SCALE MRNA]</scope>
    <source>
        <tissue>Embryo</tissue>
    </source>
</reference>
<keyword id="KW-1015">Disulfide bond</keyword>
<keyword id="KW-0256">Endoplasmic reticulum</keyword>
<keyword id="KW-0472">Membrane</keyword>
<keyword id="KW-0496">Mitochondrion</keyword>
<keyword id="KW-1185">Reference proteome</keyword>
<keyword id="KW-0732">Signal</keyword>
<keyword id="KW-0812">Transmembrane</keyword>
<keyword id="KW-1133">Transmembrane helix</keyword>
<organism>
    <name type="scientific">Danio rerio</name>
    <name type="common">Zebrafish</name>
    <name type="synonym">Brachydanio rerio</name>
    <dbReference type="NCBI Taxonomy" id="7955"/>
    <lineage>
        <taxon>Eukaryota</taxon>
        <taxon>Metazoa</taxon>
        <taxon>Chordata</taxon>
        <taxon>Craniata</taxon>
        <taxon>Vertebrata</taxon>
        <taxon>Euteleostomi</taxon>
        <taxon>Actinopterygii</taxon>
        <taxon>Neopterygii</taxon>
        <taxon>Teleostei</taxon>
        <taxon>Ostariophysi</taxon>
        <taxon>Cypriniformes</taxon>
        <taxon>Danionidae</taxon>
        <taxon>Danioninae</taxon>
        <taxon>Danio</taxon>
    </lineage>
</organism>
<protein>
    <recommendedName>
        <fullName>Thioredoxin-related transmembrane protein 2-B</fullName>
    </recommendedName>
    <alternativeName>
        <fullName>Thioredoxin domain-containing protein 14</fullName>
    </alternativeName>
</protein>
<evidence type="ECO:0000250" key="1">
    <source>
        <dbReference type="UniProtKB" id="Q9Y320"/>
    </source>
</evidence>
<evidence type="ECO:0000255" key="2"/>
<evidence type="ECO:0000255" key="3">
    <source>
        <dbReference type="PROSITE-ProRule" id="PRU00691"/>
    </source>
</evidence>
<evidence type="ECO:0000256" key="4">
    <source>
        <dbReference type="SAM" id="MobiDB-lite"/>
    </source>
</evidence>
<evidence type="ECO:0000305" key="5"/>
<proteinExistence type="evidence at transcript level"/>
<sequence length="307" mass="35723">MALLTPLFAFLYHLPQVYKWLLKPYYIASLFMSIAFVMIRKMPGVCEHLSTQREDGNSCDFDWREVEILMFLSAIVMMKNRRAITIEQHVGNIILFCKVANVILFFRLDIRLGLLYLTLCIVFLMTCKPPLYMGPEYIKYFSDKTIDEELEKDHRVTWIVEFFANWSPECQSFASVYADLSLKYNCAGLKFGKVDIGRYGEVSKKYRVSTSPLSKQLPSLVLFQGGKEVMRRPQVDKKGRAVSWTFTEENIIREFNLNELYQKSKKLGKTKEKLERPSELVFSTVPEEEEPEAETISAMDTESKKDK</sequence>
<feature type="signal peptide" evidence="2">
    <location>
        <begin position="1"/>
        <end position="19"/>
    </location>
</feature>
<feature type="chain" id="PRO_0000315757" description="Thioredoxin-related transmembrane protein 2-B">
    <location>
        <begin position="20"/>
        <end position="307"/>
    </location>
</feature>
<feature type="topological domain" description="Extracellular" evidence="2">
    <location>
        <begin position="20"/>
        <end position="111"/>
    </location>
</feature>
<feature type="transmembrane region" description="Helical" evidence="2">
    <location>
        <begin position="112"/>
        <end position="132"/>
    </location>
</feature>
<feature type="topological domain" description="Cytoplasmic" evidence="2">
    <location>
        <begin position="133"/>
        <end position="307"/>
    </location>
</feature>
<feature type="domain" description="Thioredoxin" evidence="3">
    <location>
        <begin position="132"/>
        <end position="269"/>
    </location>
</feature>
<feature type="region of interest" description="Disordered" evidence="4">
    <location>
        <begin position="268"/>
        <end position="307"/>
    </location>
</feature>
<feature type="short sequence motif" description="Di-lysine motif" evidence="5">
    <location>
        <begin position="304"/>
        <end position="307"/>
    </location>
</feature>
<feature type="compositionally biased region" description="Basic and acidic residues" evidence="4">
    <location>
        <begin position="269"/>
        <end position="278"/>
    </location>
</feature>
<accession>Q6IQC7</accession>
<accession>B8A5B2</accession>
<gene>
    <name type="primary">tmx2b</name>
    <name type="synonym">tmx2</name>
    <name type="synonym">txndc14</name>
    <name type="ORF">si:dkey-28b4.1</name>
    <name type="ORF">zgc:86830</name>
</gene>